<evidence type="ECO:0000255" key="1">
    <source>
        <dbReference type="HAMAP-Rule" id="MF_00124"/>
    </source>
</evidence>
<accession>Q2K5N6</accession>
<proteinExistence type="inferred from homology"/>
<sequence>MAKLYFNYSTMNAGKSTMLLQASYNYQERGMRTVQLIAAFDERAGRGVIGSRIGLEASAIPFEPDEDLFRLVMTLSGEGAPISCVFVDEAHFMTPLHVWQLARIVDRLGIPVMVYGLRTDFQGKLFPASQELLAIADEMREVRTICHCGRKATMVVRLDAQGKVLHEGAQIDVGGNEKYVSLCRRHWDDEMNGAWIAEPV</sequence>
<protein>
    <recommendedName>
        <fullName evidence="1">Thymidine kinase</fullName>
        <ecNumber evidence="1">2.7.1.21</ecNumber>
    </recommendedName>
</protein>
<dbReference type="EC" id="2.7.1.21" evidence="1"/>
<dbReference type="EMBL" id="CP000133">
    <property type="protein sequence ID" value="ABC91850.1"/>
    <property type="molecule type" value="Genomic_DNA"/>
</dbReference>
<dbReference type="RefSeq" id="WP_011426320.1">
    <property type="nucleotide sequence ID" value="NC_007761.1"/>
</dbReference>
<dbReference type="SMR" id="Q2K5N6"/>
<dbReference type="KEGG" id="ret:RHE_CH03084"/>
<dbReference type="eggNOG" id="COG1435">
    <property type="taxonomic scope" value="Bacteria"/>
</dbReference>
<dbReference type="HOGENOM" id="CLU_064400_2_1_5"/>
<dbReference type="OrthoDB" id="9781579at2"/>
<dbReference type="Proteomes" id="UP000001936">
    <property type="component" value="Chromosome"/>
</dbReference>
<dbReference type="GO" id="GO:0005829">
    <property type="term" value="C:cytosol"/>
    <property type="evidence" value="ECO:0007669"/>
    <property type="project" value="TreeGrafter"/>
</dbReference>
<dbReference type="GO" id="GO:0005524">
    <property type="term" value="F:ATP binding"/>
    <property type="evidence" value="ECO:0007669"/>
    <property type="project" value="UniProtKB-UniRule"/>
</dbReference>
<dbReference type="GO" id="GO:0004797">
    <property type="term" value="F:thymidine kinase activity"/>
    <property type="evidence" value="ECO:0007669"/>
    <property type="project" value="UniProtKB-UniRule"/>
</dbReference>
<dbReference type="GO" id="GO:0008270">
    <property type="term" value="F:zinc ion binding"/>
    <property type="evidence" value="ECO:0007669"/>
    <property type="project" value="UniProtKB-UniRule"/>
</dbReference>
<dbReference type="GO" id="GO:0071897">
    <property type="term" value="P:DNA biosynthetic process"/>
    <property type="evidence" value="ECO:0007669"/>
    <property type="project" value="UniProtKB-KW"/>
</dbReference>
<dbReference type="GO" id="GO:0046104">
    <property type="term" value="P:thymidine metabolic process"/>
    <property type="evidence" value="ECO:0007669"/>
    <property type="project" value="TreeGrafter"/>
</dbReference>
<dbReference type="Gene3D" id="3.30.60.20">
    <property type="match status" value="1"/>
</dbReference>
<dbReference type="Gene3D" id="3.40.50.300">
    <property type="entry name" value="P-loop containing nucleotide triphosphate hydrolases"/>
    <property type="match status" value="1"/>
</dbReference>
<dbReference type="HAMAP" id="MF_00124">
    <property type="entry name" value="Thymidine_kinase"/>
    <property type="match status" value="1"/>
</dbReference>
<dbReference type="InterPro" id="IPR027417">
    <property type="entry name" value="P-loop_NTPase"/>
</dbReference>
<dbReference type="InterPro" id="IPR001267">
    <property type="entry name" value="Thymidine_kinase"/>
</dbReference>
<dbReference type="InterPro" id="IPR020633">
    <property type="entry name" value="Thymidine_kinase_CS"/>
</dbReference>
<dbReference type="NCBIfam" id="NF003300">
    <property type="entry name" value="PRK04296.1-5"/>
    <property type="match status" value="1"/>
</dbReference>
<dbReference type="PANTHER" id="PTHR11441">
    <property type="entry name" value="THYMIDINE KINASE"/>
    <property type="match status" value="1"/>
</dbReference>
<dbReference type="PANTHER" id="PTHR11441:SF0">
    <property type="entry name" value="THYMIDINE KINASE, CYTOSOLIC"/>
    <property type="match status" value="1"/>
</dbReference>
<dbReference type="Pfam" id="PF00265">
    <property type="entry name" value="TK"/>
    <property type="match status" value="1"/>
</dbReference>
<dbReference type="PIRSF" id="PIRSF035805">
    <property type="entry name" value="TK_cell"/>
    <property type="match status" value="1"/>
</dbReference>
<dbReference type="SUPFAM" id="SSF57716">
    <property type="entry name" value="Glucocorticoid receptor-like (DNA-binding domain)"/>
    <property type="match status" value="1"/>
</dbReference>
<dbReference type="SUPFAM" id="SSF52540">
    <property type="entry name" value="P-loop containing nucleoside triphosphate hydrolases"/>
    <property type="match status" value="1"/>
</dbReference>
<dbReference type="PROSITE" id="PS00603">
    <property type="entry name" value="TK_CELLULAR_TYPE"/>
    <property type="match status" value="1"/>
</dbReference>
<feature type="chain" id="PRO_0000242800" description="Thymidine kinase">
    <location>
        <begin position="1"/>
        <end position="200"/>
    </location>
</feature>
<feature type="active site" description="Proton acceptor" evidence="1">
    <location>
        <position position="89"/>
    </location>
</feature>
<feature type="binding site" evidence="1">
    <location>
        <begin position="9"/>
        <end position="16"/>
    </location>
    <ligand>
        <name>ATP</name>
        <dbReference type="ChEBI" id="CHEBI:30616"/>
    </ligand>
</feature>
<feature type="binding site" evidence="1">
    <location>
        <begin position="88"/>
        <end position="91"/>
    </location>
    <ligand>
        <name>ATP</name>
        <dbReference type="ChEBI" id="CHEBI:30616"/>
    </ligand>
</feature>
<feature type="binding site" evidence="1">
    <location>
        <position position="146"/>
    </location>
    <ligand>
        <name>Zn(2+)</name>
        <dbReference type="ChEBI" id="CHEBI:29105"/>
    </ligand>
</feature>
<feature type="binding site" evidence="1">
    <location>
        <position position="148"/>
    </location>
    <ligand>
        <name>Zn(2+)</name>
        <dbReference type="ChEBI" id="CHEBI:29105"/>
    </ligand>
</feature>
<feature type="binding site" evidence="1">
    <location>
        <position position="183"/>
    </location>
    <ligand>
        <name>Zn(2+)</name>
        <dbReference type="ChEBI" id="CHEBI:29105"/>
    </ligand>
</feature>
<feature type="binding site" evidence="1">
    <location>
        <position position="186"/>
    </location>
    <ligand>
        <name>Zn(2+)</name>
        <dbReference type="ChEBI" id="CHEBI:29105"/>
    </ligand>
</feature>
<gene>
    <name evidence="1" type="primary">tdk</name>
    <name type="ordered locus">RHE_CH03084</name>
</gene>
<name>KITH_RHIEC</name>
<comment type="catalytic activity">
    <reaction evidence="1">
        <text>thymidine + ATP = dTMP + ADP + H(+)</text>
        <dbReference type="Rhea" id="RHEA:19129"/>
        <dbReference type="ChEBI" id="CHEBI:15378"/>
        <dbReference type="ChEBI" id="CHEBI:17748"/>
        <dbReference type="ChEBI" id="CHEBI:30616"/>
        <dbReference type="ChEBI" id="CHEBI:63528"/>
        <dbReference type="ChEBI" id="CHEBI:456216"/>
        <dbReference type="EC" id="2.7.1.21"/>
    </reaction>
</comment>
<comment type="subunit">
    <text evidence="1">Homotetramer.</text>
</comment>
<comment type="subcellular location">
    <subcellularLocation>
        <location evidence="1">Cytoplasm</location>
    </subcellularLocation>
</comment>
<comment type="similarity">
    <text evidence="1">Belongs to the thymidine kinase family.</text>
</comment>
<keyword id="KW-0067">ATP-binding</keyword>
<keyword id="KW-0963">Cytoplasm</keyword>
<keyword id="KW-0237">DNA synthesis</keyword>
<keyword id="KW-0418">Kinase</keyword>
<keyword id="KW-0479">Metal-binding</keyword>
<keyword id="KW-0547">Nucleotide-binding</keyword>
<keyword id="KW-1185">Reference proteome</keyword>
<keyword id="KW-0808">Transferase</keyword>
<keyword id="KW-0862">Zinc</keyword>
<organism>
    <name type="scientific">Rhizobium etli (strain ATCC 51251 / DSM 11541 / JCM 21823 / NBRC 15573 / CFN 42)</name>
    <dbReference type="NCBI Taxonomy" id="347834"/>
    <lineage>
        <taxon>Bacteria</taxon>
        <taxon>Pseudomonadati</taxon>
        <taxon>Pseudomonadota</taxon>
        <taxon>Alphaproteobacteria</taxon>
        <taxon>Hyphomicrobiales</taxon>
        <taxon>Rhizobiaceae</taxon>
        <taxon>Rhizobium/Agrobacterium group</taxon>
        <taxon>Rhizobium</taxon>
    </lineage>
</organism>
<reference key="1">
    <citation type="journal article" date="2006" name="Proc. Natl. Acad. Sci. U.S.A.">
        <title>The partitioned Rhizobium etli genome: genetic and metabolic redundancy in seven interacting replicons.</title>
        <authorList>
            <person name="Gonzalez V."/>
            <person name="Santamaria R.I."/>
            <person name="Bustos P."/>
            <person name="Hernandez-Gonzalez I."/>
            <person name="Medrano-Soto A."/>
            <person name="Moreno-Hagelsieb G."/>
            <person name="Janga S.C."/>
            <person name="Ramirez M.A."/>
            <person name="Jimenez-Jacinto V."/>
            <person name="Collado-Vides J."/>
            <person name="Davila G."/>
        </authorList>
    </citation>
    <scope>NUCLEOTIDE SEQUENCE [LARGE SCALE GENOMIC DNA]</scope>
    <source>
        <strain>ATCC 51251 / DSM 11541 / JCM 21823 / NBRC 15573 / CFN 42</strain>
    </source>
</reference>